<comment type="function">
    <text evidence="2 3 4">Catalyzes one of the two ATP producing reactions in the glycolytic pathway via the reversible conversion of 1,3-diphosphoglycerate to 3-phosphoglycerate (By similarity). Both L- and D- forms of purine and pyrimidine nucleotides can be used as substrates, but the activity is much lower on pyrimidines (By similarity). Negatively regulates the biosynthesis of acetyl-CoA from pyruvate in the mitochondrion (By similarity).</text>
</comment>
<comment type="catalytic activity">
    <reaction evidence="4">
        <text>(2R)-3-phosphoglycerate + ATP = (2R)-3-phospho-glyceroyl phosphate + ADP</text>
        <dbReference type="Rhea" id="RHEA:14801"/>
        <dbReference type="ChEBI" id="CHEBI:30616"/>
        <dbReference type="ChEBI" id="CHEBI:57604"/>
        <dbReference type="ChEBI" id="CHEBI:58272"/>
        <dbReference type="ChEBI" id="CHEBI:456216"/>
        <dbReference type="EC" id="2.7.2.3"/>
    </reaction>
</comment>
<comment type="cofactor">
    <cofactor evidence="3">
        <name>Mg(2+)</name>
        <dbReference type="ChEBI" id="CHEBI:18420"/>
    </cofactor>
</comment>
<comment type="pathway">
    <text evidence="4">Carbohydrate degradation; glycolysis; pyruvate from D-glyceraldehyde 3-phosphate: step 2/5.</text>
</comment>
<comment type="subunit">
    <text evidence="1">Monomer.</text>
</comment>
<comment type="subcellular location">
    <subcellularLocation>
        <location evidence="4">Cytoplasm</location>
    </subcellularLocation>
    <subcellularLocation>
        <location evidence="4">Mitochondrion</location>
    </subcellularLocation>
</comment>
<comment type="similarity">
    <text evidence="6">Belongs to the phosphoglycerate kinase family.</text>
</comment>
<keyword id="KW-0067">ATP-binding</keyword>
<keyword id="KW-0963">Cytoplasm</keyword>
<keyword id="KW-0324">Glycolysis</keyword>
<keyword id="KW-0418">Kinase</keyword>
<keyword id="KW-0460">Magnesium</keyword>
<keyword id="KW-0479">Metal-binding</keyword>
<keyword id="KW-0496">Mitochondrion</keyword>
<keyword id="KW-0547">Nucleotide-binding</keyword>
<keyword id="KW-1185">Reference proteome</keyword>
<keyword id="KW-0808">Transferase</keyword>
<accession>P11977</accession>
<accession>C8VSJ5</accession>
<accession>Q5BDY4</accession>
<organism>
    <name type="scientific">Emericella nidulans (strain FGSC A4 / ATCC 38163 / CBS 112.46 / NRRL 194 / M139)</name>
    <name type="common">Aspergillus nidulans</name>
    <dbReference type="NCBI Taxonomy" id="227321"/>
    <lineage>
        <taxon>Eukaryota</taxon>
        <taxon>Fungi</taxon>
        <taxon>Dikarya</taxon>
        <taxon>Ascomycota</taxon>
        <taxon>Pezizomycotina</taxon>
        <taxon>Eurotiomycetes</taxon>
        <taxon>Eurotiomycetidae</taxon>
        <taxon>Eurotiales</taxon>
        <taxon>Aspergillaceae</taxon>
        <taxon>Aspergillus</taxon>
        <taxon>Aspergillus subgen. Nidulantes</taxon>
    </lineage>
</organism>
<reference key="1">
    <citation type="journal article" date="1986" name="Gene">
        <title>Transcription and processing signals in the 3-phosphoglycerate kinase (PGK) gene from Aspergillus nidulans.</title>
        <authorList>
            <person name="Clements J.M."/>
            <person name="Roberts C.F."/>
        </authorList>
    </citation>
    <scope>NUCLEOTIDE SEQUENCE [GENOMIC DNA]</scope>
</reference>
<reference key="2">
    <citation type="journal article" date="2005" name="Nature">
        <title>Sequencing of Aspergillus nidulans and comparative analysis with A. fumigatus and A. oryzae.</title>
        <authorList>
            <person name="Galagan J.E."/>
            <person name="Calvo S.E."/>
            <person name="Cuomo C."/>
            <person name="Ma L.-J."/>
            <person name="Wortman J.R."/>
            <person name="Batzoglou S."/>
            <person name="Lee S.-I."/>
            <person name="Bastuerkmen M."/>
            <person name="Spevak C.C."/>
            <person name="Clutterbuck J."/>
            <person name="Kapitonov V."/>
            <person name="Jurka J."/>
            <person name="Scazzocchio C."/>
            <person name="Farman M.L."/>
            <person name="Butler J."/>
            <person name="Purcell S."/>
            <person name="Harris S."/>
            <person name="Braus G.H."/>
            <person name="Draht O."/>
            <person name="Busch S."/>
            <person name="D'Enfert C."/>
            <person name="Bouchier C."/>
            <person name="Goldman G.H."/>
            <person name="Bell-Pedersen D."/>
            <person name="Griffiths-Jones S."/>
            <person name="Doonan J.H."/>
            <person name="Yu J."/>
            <person name="Vienken K."/>
            <person name="Pain A."/>
            <person name="Freitag M."/>
            <person name="Selker E.U."/>
            <person name="Archer D.B."/>
            <person name="Penalva M.A."/>
            <person name="Oakley B.R."/>
            <person name="Momany M."/>
            <person name="Tanaka T."/>
            <person name="Kumagai T."/>
            <person name="Asai K."/>
            <person name="Machida M."/>
            <person name="Nierman W.C."/>
            <person name="Denning D.W."/>
            <person name="Caddick M.X."/>
            <person name="Hynes M."/>
            <person name="Paoletti M."/>
            <person name="Fischer R."/>
            <person name="Miller B.L."/>
            <person name="Dyer P.S."/>
            <person name="Sachs M.S."/>
            <person name="Osmani S.A."/>
            <person name="Birren B.W."/>
        </authorList>
    </citation>
    <scope>NUCLEOTIDE SEQUENCE [LARGE SCALE GENOMIC DNA]</scope>
    <source>
        <strain>FGSC A4 / ATCC 38163 / CBS 112.46 / NRRL 194 / M139</strain>
    </source>
</reference>
<reference key="3">
    <citation type="journal article" date="2009" name="Fungal Genet. Biol.">
        <title>The 2008 update of the Aspergillus nidulans genome annotation: a community effort.</title>
        <authorList>
            <person name="Wortman J.R."/>
            <person name="Gilsenan J.M."/>
            <person name="Joardar V."/>
            <person name="Deegan J."/>
            <person name="Clutterbuck J."/>
            <person name="Andersen M.R."/>
            <person name="Archer D."/>
            <person name="Bencina M."/>
            <person name="Braus G."/>
            <person name="Coutinho P."/>
            <person name="von Dohren H."/>
            <person name="Doonan J."/>
            <person name="Driessen A.J."/>
            <person name="Durek P."/>
            <person name="Espeso E."/>
            <person name="Fekete E."/>
            <person name="Flipphi M."/>
            <person name="Estrada C.G."/>
            <person name="Geysens S."/>
            <person name="Goldman G."/>
            <person name="de Groot P.W."/>
            <person name="Hansen K."/>
            <person name="Harris S.D."/>
            <person name="Heinekamp T."/>
            <person name="Helmstaedt K."/>
            <person name="Henrissat B."/>
            <person name="Hofmann G."/>
            <person name="Homan T."/>
            <person name="Horio T."/>
            <person name="Horiuchi H."/>
            <person name="James S."/>
            <person name="Jones M."/>
            <person name="Karaffa L."/>
            <person name="Karanyi Z."/>
            <person name="Kato M."/>
            <person name="Keller N."/>
            <person name="Kelly D.E."/>
            <person name="Kiel J.A."/>
            <person name="Kim J.M."/>
            <person name="van der Klei I.J."/>
            <person name="Klis F.M."/>
            <person name="Kovalchuk A."/>
            <person name="Krasevec N."/>
            <person name="Kubicek C.P."/>
            <person name="Liu B."/>
            <person name="Maccabe A."/>
            <person name="Meyer V."/>
            <person name="Mirabito P."/>
            <person name="Miskei M."/>
            <person name="Mos M."/>
            <person name="Mullins J."/>
            <person name="Nelson D.R."/>
            <person name="Nielsen J."/>
            <person name="Oakley B.R."/>
            <person name="Osmani S.A."/>
            <person name="Pakula T."/>
            <person name="Paszewski A."/>
            <person name="Paulsen I."/>
            <person name="Pilsyk S."/>
            <person name="Pocsi I."/>
            <person name="Punt P.J."/>
            <person name="Ram A.F."/>
            <person name="Ren Q."/>
            <person name="Robellet X."/>
            <person name="Robson G."/>
            <person name="Seiboth B."/>
            <person name="van Solingen P."/>
            <person name="Specht T."/>
            <person name="Sun J."/>
            <person name="Taheri-Talesh N."/>
            <person name="Takeshita N."/>
            <person name="Ussery D."/>
            <person name="vanKuyk P.A."/>
            <person name="Visser H."/>
            <person name="van de Vondervoort P.J."/>
            <person name="de Vries R.P."/>
            <person name="Walton J."/>
            <person name="Xiang X."/>
            <person name="Xiong Y."/>
            <person name="Zeng A.P."/>
            <person name="Brandt B.W."/>
            <person name="Cornell M.J."/>
            <person name="van den Hondel C.A."/>
            <person name="Visser J."/>
            <person name="Oliver S.G."/>
            <person name="Turner G."/>
        </authorList>
    </citation>
    <scope>GENOME REANNOTATION</scope>
    <source>
        <strain>FGSC A4 / ATCC 38163 / CBS 112.46 / NRRL 194 / M139</strain>
    </source>
</reference>
<evidence type="ECO:0000250" key="1"/>
<evidence type="ECO:0000250" key="2">
    <source>
        <dbReference type="UniProtKB" id="A0A7G5KET3"/>
    </source>
</evidence>
<evidence type="ECO:0000250" key="3">
    <source>
        <dbReference type="UniProtKB" id="P00558"/>
    </source>
</evidence>
<evidence type="ECO:0000250" key="4">
    <source>
        <dbReference type="UniProtKB" id="P00560"/>
    </source>
</evidence>
<evidence type="ECO:0000250" key="5">
    <source>
        <dbReference type="UniProtKB" id="Q7SIB7"/>
    </source>
</evidence>
<evidence type="ECO:0000305" key="6"/>
<gene>
    <name type="primary">pgkA</name>
    <name type="synonym">pgk</name>
    <name type="ORF">AN1246</name>
</gene>
<proteinExistence type="inferred from homology"/>
<sequence>MSLTSKLSITDVDLKDKRVLIRVDFNVPLDKNDNTTITNPQRIVGALPTIKYAIDNGAKAVILMSHLGRPDGKKNPKYSLKPVVPKLKELLGRDVIFTEDCVGPEVEETVNKASGGQVILLENLRFHAEEEGSSKDADGNKVKADKDAVAQFRKGLTALGDIYINDAFGTAHRAHSSMVGVDLPQKASGFLVKKELEYFAKALEEPQRPFLAILGGSKVSDKIQLIDNLLPKVNSLIITGGMAFTFKKTLENVKIGSSLFDEAGSKIVGNIIEKAKKHNVKVVLPVDYVTADKFAADAKTGYATDEQGIPDGYMGLDVGEKSVESYKQTIAESKTILWNGPPGVFEMEPFAKATKATLDAAVAAVQNGATVIIGGGDTATVAAKYGAEDKISHVSTGGGASLELLEGKELPGVAALSEKSK</sequence>
<name>PGK_EMENI</name>
<feature type="chain" id="PRO_0000145880" description="Phosphoglycerate kinase">
    <location>
        <begin position="1"/>
        <end position="421"/>
    </location>
</feature>
<feature type="binding site" evidence="3">
    <location>
        <position position="23"/>
    </location>
    <ligand>
        <name>(2R)-3-phosphoglycerate</name>
        <dbReference type="ChEBI" id="CHEBI:58272"/>
    </ligand>
</feature>
<feature type="binding site" evidence="5">
    <location>
        <position position="24"/>
    </location>
    <ligand>
        <name>(2R)-3-phosphoglycerate</name>
        <dbReference type="ChEBI" id="CHEBI:58272"/>
    </ligand>
</feature>
<feature type="binding site" evidence="3">
    <location>
        <position position="25"/>
    </location>
    <ligand>
        <name>(2R)-3-phosphoglycerate</name>
        <dbReference type="ChEBI" id="CHEBI:58272"/>
    </ligand>
</feature>
<feature type="binding site" evidence="5">
    <location>
        <position position="26"/>
    </location>
    <ligand>
        <name>(2R)-3-phosphoglycerate</name>
        <dbReference type="ChEBI" id="CHEBI:58272"/>
    </ligand>
</feature>
<feature type="binding site" evidence="3">
    <location>
        <position position="41"/>
    </location>
    <ligand>
        <name>(2R)-3-phosphoglycerate</name>
        <dbReference type="ChEBI" id="CHEBI:58272"/>
    </ligand>
</feature>
<feature type="binding site" evidence="5">
    <location>
        <position position="42"/>
    </location>
    <ligand>
        <name>(2R)-3-phosphoglycerate</name>
        <dbReference type="ChEBI" id="CHEBI:58272"/>
    </ligand>
</feature>
<feature type="binding site" evidence="3">
    <location>
        <position position="65"/>
    </location>
    <ligand>
        <name>(2R)-3-phosphoglycerate</name>
        <dbReference type="ChEBI" id="CHEBI:58272"/>
    </ligand>
</feature>
<feature type="binding site" evidence="5">
    <location>
        <position position="66"/>
    </location>
    <ligand>
        <name>(2R)-3-phosphoglycerate</name>
        <dbReference type="ChEBI" id="CHEBI:58272"/>
    </ligand>
</feature>
<feature type="binding site" evidence="3">
    <location>
        <position position="68"/>
    </location>
    <ligand>
        <name>(2R)-3-phosphoglycerate</name>
        <dbReference type="ChEBI" id="CHEBI:58272"/>
    </ligand>
</feature>
<feature type="binding site" evidence="5">
    <location>
        <position position="69"/>
    </location>
    <ligand>
        <name>(2R)-3-phosphoglycerate</name>
        <dbReference type="ChEBI" id="CHEBI:58272"/>
    </ligand>
</feature>
<feature type="binding site" evidence="3">
    <location>
        <position position="124"/>
    </location>
    <ligand>
        <name>(2R)-3-phosphoglycerate</name>
        <dbReference type="ChEBI" id="CHEBI:58272"/>
    </ligand>
</feature>
<feature type="binding site" evidence="5">
    <location>
        <position position="125"/>
    </location>
    <ligand>
        <name>(2R)-3-phosphoglycerate</name>
        <dbReference type="ChEBI" id="CHEBI:58272"/>
    </ligand>
</feature>
<feature type="binding site" evidence="3">
    <location>
        <position position="172"/>
    </location>
    <ligand>
        <name>(2R)-3-phosphoglycerate</name>
        <dbReference type="ChEBI" id="CHEBI:58272"/>
    </ligand>
</feature>
<feature type="binding site" evidence="5">
    <location>
        <position position="173"/>
    </location>
    <ligand>
        <name>(2R)-3-phosphoglycerate</name>
        <dbReference type="ChEBI" id="CHEBI:58272"/>
    </ligand>
</feature>
<feature type="binding site" evidence="3">
    <location>
        <position position="216"/>
    </location>
    <ligand>
        <name>ADP</name>
        <dbReference type="ChEBI" id="CHEBI:456216"/>
    </ligand>
</feature>
<feature type="binding site" evidence="3">
    <location>
        <position position="216"/>
    </location>
    <ligand>
        <name>CDP</name>
        <dbReference type="ChEBI" id="CHEBI:58069"/>
    </ligand>
</feature>
<feature type="binding site" evidence="5">
    <location>
        <position position="218"/>
    </location>
    <ligand>
        <name>AMP</name>
        <dbReference type="ChEBI" id="CHEBI:456215"/>
    </ligand>
</feature>
<feature type="binding site" evidence="3">
    <location>
        <position position="221"/>
    </location>
    <ligand>
        <name>CDP</name>
        <dbReference type="ChEBI" id="CHEBI:58069"/>
    </ligand>
</feature>
<feature type="binding site" evidence="3">
    <location>
        <position position="221"/>
    </location>
    <ligand>
        <name>Mg(2+)</name>
        <dbReference type="ChEBI" id="CHEBI:18420"/>
    </ligand>
</feature>
<feature type="binding site" evidence="5">
    <location>
        <position position="222"/>
    </location>
    <ligand>
        <name>AMP</name>
        <dbReference type="ChEBI" id="CHEBI:456215"/>
    </ligand>
</feature>
<feature type="binding site" evidence="5">
    <location>
        <position position="222"/>
    </location>
    <ligand>
        <name>ATP</name>
        <dbReference type="ChEBI" id="CHEBI:30616"/>
    </ligand>
</feature>
<feature type="binding site" evidence="3">
    <location>
        <position position="240"/>
    </location>
    <ligand>
        <name>ADP</name>
        <dbReference type="ChEBI" id="CHEBI:456216"/>
    </ligand>
</feature>
<feature type="binding site" evidence="3">
    <location>
        <position position="240"/>
    </location>
    <ligand>
        <name>CDP</name>
        <dbReference type="ChEBI" id="CHEBI:58069"/>
    </ligand>
</feature>
<feature type="binding site" evidence="5">
    <location>
        <position position="241"/>
    </location>
    <ligand>
        <name>AMP</name>
        <dbReference type="ChEBI" id="CHEBI:456215"/>
    </ligand>
</feature>
<feature type="binding site" evidence="5">
    <location>
        <position position="241"/>
    </location>
    <ligand>
        <name>ATP</name>
        <dbReference type="ChEBI" id="CHEBI:30616"/>
    </ligand>
</feature>
<feature type="binding site" evidence="5">
    <location>
        <position position="315"/>
    </location>
    <ligand>
        <name>AMP</name>
        <dbReference type="ChEBI" id="CHEBI:456215"/>
    </ligand>
</feature>
<feature type="binding site" evidence="5">
    <location>
        <position position="315"/>
    </location>
    <ligand>
        <name>ATP</name>
        <dbReference type="ChEBI" id="CHEBI:30616"/>
    </ligand>
</feature>
<feature type="binding site" evidence="3">
    <location>
        <position position="340"/>
    </location>
    <ligand>
        <name>CDP</name>
        <dbReference type="ChEBI" id="CHEBI:58069"/>
    </ligand>
</feature>
<feature type="binding site" evidence="3">
    <location>
        <position position="345"/>
    </location>
    <ligand>
        <name>ADP</name>
        <dbReference type="ChEBI" id="CHEBI:456216"/>
    </ligand>
</feature>
<feature type="binding site" evidence="3">
    <location>
        <position position="345"/>
    </location>
    <ligand>
        <name>CDP</name>
        <dbReference type="ChEBI" id="CHEBI:58069"/>
    </ligand>
</feature>
<feature type="binding site" evidence="5">
    <location>
        <position position="346"/>
    </location>
    <ligand>
        <name>AMP</name>
        <dbReference type="ChEBI" id="CHEBI:456215"/>
    </ligand>
</feature>
<feature type="binding site" evidence="5">
    <location>
        <position position="346"/>
    </location>
    <ligand>
        <name>ATP</name>
        <dbReference type="ChEBI" id="CHEBI:30616"/>
    </ligand>
</feature>
<feature type="binding site" evidence="5">
    <location>
        <position position="377"/>
    </location>
    <ligand>
        <name>ATP</name>
        <dbReference type="ChEBI" id="CHEBI:30616"/>
    </ligand>
</feature>
<feature type="binding site" evidence="5">
    <location>
        <position position="377"/>
    </location>
    <ligand>
        <name>Mg(2+)</name>
        <dbReference type="ChEBI" id="CHEBI:18420"/>
    </ligand>
</feature>
<feature type="binding site" evidence="5">
    <location>
        <position position="378"/>
    </location>
    <ligand>
        <name>ATP</name>
        <dbReference type="ChEBI" id="CHEBI:30616"/>
    </ligand>
</feature>
<dbReference type="EC" id="2.7.2.3" evidence="4"/>
<dbReference type="EMBL" id="M27549">
    <property type="protein sequence ID" value="AAA33318.1"/>
    <property type="molecule type" value="Genomic_DNA"/>
</dbReference>
<dbReference type="EMBL" id="AACD01000017">
    <property type="protein sequence ID" value="EAA65839.1"/>
    <property type="molecule type" value="Genomic_DNA"/>
</dbReference>
<dbReference type="EMBL" id="BN001308">
    <property type="protein sequence ID" value="CBF87861.1"/>
    <property type="molecule type" value="Genomic_DNA"/>
</dbReference>
<dbReference type="PIR" id="A24830">
    <property type="entry name" value="A24830"/>
</dbReference>
<dbReference type="RefSeq" id="XP_658850.1">
    <property type="nucleotide sequence ID" value="XM_653758.1"/>
</dbReference>
<dbReference type="SMR" id="P11977"/>
<dbReference type="FunCoup" id="P11977">
    <property type="interactions" value="716"/>
</dbReference>
<dbReference type="STRING" id="227321.P11977"/>
<dbReference type="EnsemblFungi" id="CBF87861">
    <property type="protein sequence ID" value="CBF87861"/>
    <property type="gene ID" value="ANIA_01246"/>
</dbReference>
<dbReference type="KEGG" id="ani:ANIA_01246"/>
<dbReference type="VEuPathDB" id="FungiDB:AN1246"/>
<dbReference type="eggNOG" id="KOG1367">
    <property type="taxonomic scope" value="Eukaryota"/>
</dbReference>
<dbReference type="HOGENOM" id="CLU_025427_0_2_1"/>
<dbReference type="InParanoid" id="P11977"/>
<dbReference type="OMA" id="DMIFDIG"/>
<dbReference type="OrthoDB" id="275353at2759"/>
<dbReference type="UniPathway" id="UPA00109">
    <property type="reaction ID" value="UER00185"/>
</dbReference>
<dbReference type="Proteomes" id="UP000000560">
    <property type="component" value="Chromosome VIII"/>
</dbReference>
<dbReference type="GO" id="GO:0005829">
    <property type="term" value="C:cytosol"/>
    <property type="evidence" value="ECO:0000318"/>
    <property type="project" value="GO_Central"/>
</dbReference>
<dbReference type="GO" id="GO:0005739">
    <property type="term" value="C:mitochondrion"/>
    <property type="evidence" value="ECO:0007669"/>
    <property type="project" value="UniProtKB-SubCell"/>
</dbReference>
<dbReference type="GO" id="GO:0043531">
    <property type="term" value="F:ADP binding"/>
    <property type="evidence" value="ECO:0000318"/>
    <property type="project" value="GO_Central"/>
</dbReference>
<dbReference type="GO" id="GO:0005524">
    <property type="term" value="F:ATP binding"/>
    <property type="evidence" value="ECO:0000318"/>
    <property type="project" value="GO_Central"/>
</dbReference>
<dbReference type="GO" id="GO:0046872">
    <property type="term" value="F:metal ion binding"/>
    <property type="evidence" value="ECO:0007669"/>
    <property type="project" value="UniProtKB-KW"/>
</dbReference>
<dbReference type="GO" id="GO:0004618">
    <property type="term" value="F:phosphoglycerate kinase activity"/>
    <property type="evidence" value="ECO:0000315"/>
    <property type="project" value="AspGD"/>
</dbReference>
<dbReference type="GO" id="GO:0006094">
    <property type="term" value="P:gluconeogenesis"/>
    <property type="evidence" value="ECO:0000318"/>
    <property type="project" value="GO_Central"/>
</dbReference>
<dbReference type="GO" id="GO:0006096">
    <property type="term" value="P:glycolytic process"/>
    <property type="evidence" value="ECO:0000318"/>
    <property type="project" value="GO_Central"/>
</dbReference>
<dbReference type="CDD" id="cd00318">
    <property type="entry name" value="Phosphoglycerate_kinase"/>
    <property type="match status" value="1"/>
</dbReference>
<dbReference type="FunFam" id="3.40.50.1260:FF:000003">
    <property type="entry name" value="Phosphoglycerate kinase"/>
    <property type="match status" value="1"/>
</dbReference>
<dbReference type="FunFam" id="3.40.50.1260:FF:000019">
    <property type="entry name" value="Phosphoglycerate kinase 1"/>
    <property type="match status" value="1"/>
</dbReference>
<dbReference type="Gene3D" id="3.40.50.1260">
    <property type="entry name" value="Phosphoglycerate kinase, N-terminal domain"/>
    <property type="match status" value="3"/>
</dbReference>
<dbReference type="HAMAP" id="MF_00145">
    <property type="entry name" value="Phosphoglyc_kinase"/>
    <property type="match status" value="1"/>
</dbReference>
<dbReference type="InterPro" id="IPR001576">
    <property type="entry name" value="Phosphoglycerate_kinase"/>
</dbReference>
<dbReference type="InterPro" id="IPR015911">
    <property type="entry name" value="Phosphoglycerate_kinase_CS"/>
</dbReference>
<dbReference type="InterPro" id="IPR015824">
    <property type="entry name" value="Phosphoglycerate_kinase_N"/>
</dbReference>
<dbReference type="InterPro" id="IPR036043">
    <property type="entry name" value="Phosphoglycerate_kinase_sf"/>
</dbReference>
<dbReference type="PANTHER" id="PTHR11406">
    <property type="entry name" value="PHOSPHOGLYCERATE KINASE"/>
    <property type="match status" value="1"/>
</dbReference>
<dbReference type="PANTHER" id="PTHR11406:SF0">
    <property type="entry name" value="PHOSPHOGLYCERATE KINASE"/>
    <property type="match status" value="1"/>
</dbReference>
<dbReference type="Pfam" id="PF00162">
    <property type="entry name" value="PGK"/>
    <property type="match status" value="1"/>
</dbReference>
<dbReference type="PIRSF" id="PIRSF000724">
    <property type="entry name" value="Pgk"/>
    <property type="match status" value="1"/>
</dbReference>
<dbReference type="PRINTS" id="PR00477">
    <property type="entry name" value="PHGLYCKINASE"/>
</dbReference>
<dbReference type="SUPFAM" id="SSF53748">
    <property type="entry name" value="Phosphoglycerate kinase"/>
    <property type="match status" value="1"/>
</dbReference>
<dbReference type="PROSITE" id="PS00111">
    <property type="entry name" value="PGLYCERATE_KINASE"/>
    <property type="match status" value="1"/>
</dbReference>
<protein>
    <recommendedName>
        <fullName>Phosphoglycerate kinase</fullName>
        <ecNumber evidence="4">2.7.2.3</ecNumber>
    </recommendedName>
</protein>